<protein>
    <recommendedName>
        <fullName>Transcription factor tau subunit sfc1</fullName>
    </recommendedName>
    <alternativeName>
        <fullName>TFIIIC subunit sfc1</fullName>
    </alternativeName>
    <alternativeName>
        <fullName>Transcription factor C subunit 1</fullName>
    </alternativeName>
</protein>
<gene>
    <name type="primary">sfc1</name>
    <name type="synonym">tfc1</name>
    <name type="ORF">SPAC6F12.11c</name>
</gene>
<comment type="function">
    <text evidence="3 4">TFIIIC mediates tRNA and 5S RNA gene activation by binding to intragenic promoter elements. Upstream of the transcription start site, TFIIIC assembles the initiation complex TFIIIB-TFIIIC-tDNA, which is sufficient for RNA polymerase III recruitment and function. Part of the tauA domain of TFIIIC that binds boxA DNA promoter sites of tRNA and similar genes. Participates in the interconnection of tauA with tauB via its contacts with sfc3 and sfc6. Serves as a scaffold critical for tauA-DNA spatial configuration and tauB-DNA stability. Localizes to chromatin insulator sequence without recruiting RNA polymerase III and plays a role in nuclear organization.</text>
</comment>
<comment type="subunit">
    <text evidence="3">Component of the TFIIIC complex including sfc1, sfc3, sfc4, sfc6 and sfc7. The subunits are organized in two globular domains, tauA and tauB, connected by a proteolysis-sensitive and flexible linker. Interacts with sfc3, sfc4 and sfc6.</text>
</comment>
<comment type="subcellular location">
    <subcellularLocation>
        <location evidence="1">Nucleus</location>
    </subcellularLocation>
</comment>
<comment type="PTM">
    <text evidence="1">Phosphorylated.</text>
</comment>
<reference key="1">
    <citation type="journal article" date="2002" name="Nature">
        <title>The genome sequence of Schizosaccharomyces pombe.</title>
        <authorList>
            <person name="Wood V."/>
            <person name="Gwilliam R."/>
            <person name="Rajandream M.A."/>
            <person name="Lyne M.H."/>
            <person name="Lyne R."/>
            <person name="Stewart A."/>
            <person name="Sgouros J.G."/>
            <person name="Peat N."/>
            <person name="Hayles J."/>
            <person name="Baker S.G."/>
            <person name="Basham D."/>
            <person name="Bowman S."/>
            <person name="Brooks K."/>
            <person name="Brown D."/>
            <person name="Brown S."/>
            <person name="Chillingworth T."/>
            <person name="Churcher C.M."/>
            <person name="Collins M."/>
            <person name="Connor R."/>
            <person name="Cronin A."/>
            <person name="Davis P."/>
            <person name="Feltwell T."/>
            <person name="Fraser A."/>
            <person name="Gentles S."/>
            <person name="Goble A."/>
            <person name="Hamlin N."/>
            <person name="Harris D.E."/>
            <person name="Hidalgo J."/>
            <person name="Hodgson G."/>
            <person name="Holroyd S."/>
            <person name="Hornsby T."/>
            <person name="Howarth S."/>
            <person name="Huckle E.J."/>
            <person name="Hunt S."/>
            <person name="Jagels K."/>
            <person name="James K.D."/>
            <person name="Jones L."/>
            <person name="Jones M."/>
            <person name="Leather S."/>
            <person name="McDonald S."/>
            <person name="McLean J."/>
            <person name="Mooney P."/>
            <person name="Moule S."/>
            <person name="Mungall K.L."/>
            <person name="Murphy L.D."/>
            <person name="Niblett D."/>
            <person name="Odell C."/>
            <person name="Oliver K."/>
            <person name="O'Neil S."/>
            <person name="Pearson D."/>
            <person name="Quail M.A."/>
            <person name="Rabbinowitsch E."/>
            <person name="Rutherford K.M."/>
            <person name="Rutter S."/>
            <person name="Saunders D."/>
            <person name="Seeger K."/>
            <person name="Sharp S."/>
            <person name="Skelton J."/>
            <person name="Simmonds M.N."/>
            <person name="Squares R."/>
            <person name="Squares S."/>
            <person name="Stevens K."/>
            <person name="Taylor K."/>
            <person name="Taylor R.G."/>
            <person name="Tivey A."/>
            <person name="Walsh S.V."/>
            <person name="Warren T."/>
            <person name="Whitehead S."/>
            <person name="Woodward J.R."/>
            <person name="Volckaert G."/>
            <person name="Aert R."/>
            <person name="Robben J."/>
            <person name="Grymonprez B."/>
            <person name="Weltjens I."/>
            <person name="Vanstreels E."/>
            <person name="Rieger M."/>
            <person name="Schaefer M."/>
            <person name="Mueller-Auer S."/>
            <person name="Gabel C."/>
            <person name="Fuchs M."/>
            <person name="Duesterhoeft A."/>
            <person name="Fritzc C."/>
            <person name="Holzer E."/>
            <person name="Moestl D."/>
            <person name="Hilbert H."/>
            <person name="Borzym K."/>
            <person name="Langer I."/>
            <person name="Beck A."/>
            <person name="Lehrach H."/>
            <person name="Reinhardt R."/>
            <person name="Pohl T.M."/>
            <person name="Eger P."/>
            <person name="Zimmermann W."/>
            <person name="Wedler H."/>
            <person name="Wambutt R."/>
            <person name="Purnelle B."/>
            <person name="Goffeau A."/>
            <person name="Cadieu E."/>
            <person name="Dreano S."/>
            <person name="Gloux S."/>
            <person name="Lelaure V."/>
            <person name="Mottier S."/>
            <person name="Galibert F."/>
            <person name="Aves S.J."/>
            <person name="Xiang Z."/>
            <person name="Hunt C."/>
            <person name="Moore K."/>
            <person name="Hurst S.M."/>
            <person name="Lucas M."/>
            <person name="Rochet M."/>
            <person name="Gaillardin C."/>
            <person name="Tallada V.A."/>
            <person name="Garzon A."/>
            <person name="Thode G."/>
            <person name="Daga R.R."/>
            <person name="Cruzado L."/>
            <person name="Jimenez J."/>
            <person name="Sanchez M."/>
            <person name="del Rey F."/>
            <person name="Benito J."/>
            <person name="Dominguez A."/>
            <person name="Revuelta J.L."/>
            <person name="Moreno S."/>
            <person name="Armstrong J."/>
            <person name="Forsburg S.L."/>
            <person name="Cerutti L."/>
            <person name="Lowe T."/>
            <person name="McCombie W.R."/>
            <person name="Paulsen I."/>
            <person name="Potashkin J."/>
            <person name="Shpakovski G.V."/>
            <person name="Ussery D."/>
            <person name="Barrell B.G."/>
            <person name="Nurse P."/>
        </authorList>
    </citation>
    <scope>NUCLEOTIDE SEQUENCE [LARGE SCALE GENOMIC DNA]</scope>
    <source>
        <strain>972 / ATCC 24843</strain>
    </source>
</reference>
<reference key="2">
    <citation type="submission" date="1999-09" db="EMBL/GenBank/DDBJ databases">
        <title>S.pombe unknown protein.</title>
        <authorList>
            <person name="Kawamukai M."/>
        </authorList>
    </citation>
    <scope>NUCLEOTIDE SEQUENCE [MRNA] OF 286-456</scope>
</reference>
<reference key="3">
    <citation type="journal article" date="2000" name="J. Biol. Chem.">
        <title>Isolation and cloning of four subunits of a fission yeast TFIIIC complex that includes an ortholog of the human regulatory protein TFIIICbeta.</title>
        <authorList>
            <person name="Huang Y."/>
            <person name="Hamada M."/>
            <person name="Maraia R.J."/>
        </authorList>
    </citation>
    <scope>FUNCTION</scope>
    <scope>IDENTIFICATION IN TFIIIC</scope>
    <scope>INTERACTION WITH SFC3; SFC4 AND SFC6</scope>
</reference>
<reference key="4">
    <citation type="journal article" date="2006" name="Cell">
        <title>A role for TFIIIC transcription factor complex in genome organization.</title>
        <authorList>
            <person name="Noma K."/>
            <person name="Cam H.P."/>
            <person name="Maraia R.J."/>
            <person name="Grewal S.I.S."/>
        </authorList>
    </citation>
    <scope>FUNCTION</scope>
</reference>
<evidence type="ECO:0000250" key="1"/>
<evidence type="ECO:0000256" key="2">
    <source>
        <dbReference type="SAM" id="MobiDB-lite"/>
    </source>
</evidence>
<evidence type="ECO:0000269" key="3">
    <source>
    </source>
</evidence>
<evidence type="ECO:0000269" key="4">
    <source>
    </source>
</evidence>
<evidence type="ECO:0007829" key="5">
    <source>
        <dbReference type="PDB" id="4BJI"/>
    </source>
</evidence>
<evidence type="ECO:0007829" key="6">
    <source>
        <dbReference type="PDB" id="4BJJ"/>
    </source>
</evidence>
<name>SFC1_SCHPO</name>
<feature type="chain" id="PRO_0000116669" description="Transcription factor tau subunit sfc1">
    <location>
        <begin position="1"/>
        <end position="456"/>
    </location>
</feature>
<feature type="region of interest" description="Disordered" evidence="2">
    <location>
        <begin position="394"/>
        <end position="416"/>
    </location>
</feature>
<feature type="region of interest" description="Disordered" evidence="2">
    <location>
        <begin position="437"/>
        <end position="456"/>
    </location>
</feature>
<feature type="compositionally biased region" description="Polar residues" evidence="2">
    <location>
        <begin position="407"/>
        <end position="416"/>
    </location>
</feature>
<feature type="compositionally biased region" description="Acidic residues" evidence="2">
    <location>
        <begin position="441"/>
        <end position="456"/>
    </location>
</feature>
<feature type="strand" evidence="6">
    <location>
        <begin position="10"/>
        <end position="18"/>
    </location>
</feature>
<feature type="helix" evidence="6">
    <location>
        <begin position="23"/>
        <end position="28"/>
    </location>
</feature>
<feature type="turn" evidence="6">
    <location>
        <begin position="29"/>
        <end position="31"/>
    </location>
</feature>
<feature type="helix" evidence="6">
    <location>
        <begin position="33"/>
        <end position="45"/>
    </location>
</feature>
<feature type="helix" evidence="6">
    <location>
        <begin position="47"/>
        <end position="49"/>
    </location>
</feature>
<feature type="strand" evidence="6">
    <location>
        <begin position="69"/>
        <end position="71"/>
    </location>
</feature>
<feature type="strand" evidence="6">
    <location>
        <begin position="76"/>
        <end position="81"/>
    </location>
</feature>
<feature type="turn" evidence="6">
    <location>
        <begin position="82"/>
        <end position="85"/>
    </location>
</feature>
<feature type="strand" evidence="6">
    <location>
        <begin position="86"/>
        <end position="98"/>
    </location>
</feature>
<feature type="helix" evidence="6">
    <location>
        <begin position="103"/>
        <end position="105"/>
    </location>
</feature>
<feature type="helix" evidence="5">
    <location>
        <begin position="216"/>
        <end position="231"/>
    </location>
</feature>
<feature type="strand" evidence="5">
    <location>
        <begin position="233"/>
        <end position="236"/>
    </location>
</feature>
<feature type="helix" evidence="5">
    <location>
        <begin position="237"/>
        <end position="241"/>
    </location>
</feature>
<feature type="helix" evidence="5">
    <location>
        <begin position="246"/>
        <end position="248"/>
    </location>
</feature>
<feature type="turn" evidence="5">
    <location>
        <begin position="249"/>
        <end position="251"/>
    </location>
</feature>
<feature type="helix" evidence="5">
    <location>
        <begin position="252"/>
        <end position="255"/>
    </location>
</feature>
<feature type="helix" evidence="5">
    <location>
        <begin position="256"/>
        <end position="258"/>
    </location>
</feature>
<feature type="strand" evidence="5">
    <location>
        <begin position="260"/>
        <end position="263"/>
    </location>
</feature>
<feature type="turn" evidence="5">
    <location>
        <begin position="267"/>
        <end position="270"/>
    </location>
</feature>
<feature type="strand" evidence="5">
    <location>
        <begin position="271"/>
        <end position="274"/>
    </location>
</feature>
<feature type="helix" evidence="5">
    <location>
        <begin position="283"/>
        <end position="288"/>
    </location>
</feature>
<feature type="strand" evidence="5">
    <location>
        <begin position="290"/>
        <end position="292"/>
    </location>
</feature>
<feature type="strand" evidence="5">
    <location>
        <begin position="314"/>
        <end position="316"/>
    </location>
</feature>
<feature type="strand" evidence="5">
    <location>
        <begin position="320"/>
        <end position="322"/>
    </location>
</feature>
<feature type="helix" evidence="5">
    <location>
        <begin position="323"/>
        <end position="325"/>
    </location>
</feature>
<feature type="turn" evidence="5">
    <location>
        <begin position="329"/>
        <end position="331"/>
    </location>
</feature>
<feature type="helix" evidence="5">
    <location>
        <begin position="332"/>
        <end position="336"/>
    </location>
</feature>
<feature type="turn" evidence="5">
    <location>
        <begin position="346"/>
        <end position="348"/>
    </location>
</feature>
<feature type="helix" evidence="5">
    <location>
        <begin position="353"/>
        <end position="370"/>
    </location>
</feature>
<feature type="turn" evidence="5">
    <location>
        <begin position="371"/>
        <end position="373"/>
    </location>
</feature>
<feature type="helix" evidence="5">
    <location>
        <begin position="378"/>
        <end position="386"/>
    </location>
</feature>
<keyword id="KW-0002">3D-structure</keyword>
<keyword id="KW-0238">DNA-binding</keyword>
<keyword id="KW-0539">Nucleus</keyword>
<keyword id="KW-0597">Phosphoprotein</keyword>
<keyword id="KW-1185">Reference proteome</keyword>
<keyword id="KW-0804">Transcription</keyword>
<keyword id="KW-0805">Transcription regulation</keyword>
<sequence length="456" mass="52745">MNSLKISDNEYALIEHPGFANNKDAFFQTLGGVQSIQKACQTSFQNPKQALLELNLRPKDKYHHPVQARVQSRNDLLVTIKKMDNSVQNVSRIRQVFLFRDMADFQYSTQNSPFVQKLDSTLRVLDYNAINKFSIDLTPVQRKHVDMPPPPVFSQTSLPMSYNFLQNPLVGRVRLPNGKTTIVNLKGQCRVWIITTNMGVESVPTCRHSKLGEPSKTIQEVIEALKPLFEKRPVWTRRALLNHLDPSYTHYLKFALPYLSYLWTSGPFRDTYTRFGYDPRKDSNAAAYQALFFKLKLNGKHKGTKTHVFDGKTLFPTNRVYQVCDIVDPTIAPLLKDTQLRSECHRDTGWYRSGRYYKVRDLMREKLFALIEGEMPSEVAVNMILNAEEVEESDRYSNFDEQDNTDLNDTVRGLNTSATDDRINDLMRNLMKRSQEHEGFEDLEEIDDDYDDIFGD</sequence>
<dbReference type="EMBL" id="CU329670">
    <property type="protein sequence ID" value="CAB11095.2"/>
    <property type="molecule type" value="Genomic_DNA"/>
</dbReference>
<dbReference type="EMBL" id="AB032716">
    <property type="protein sequence ID" value="BAA84655.1"/>
    <property type="molecule type" value="mRNA"/>
</dbReference>
<dbReference type="PIR" id="T11662">
    <property type="entry name" value="T11662"/>
</dbReference>
<dbReference type="RefSeq" id="NP_593297.1">
    <property type="nucleotide sequence ID" value="NM_001018727.2"/>
</dbReference>
<dbReference type="PDB" id="4BJI">
    <property type="method" value="X-ray"/>
    <property type="resolution" value="1.45 A"/>
    <property type="chains" value="A=186-396"/>
</dbReference>
<dbReference type="PDB" id="4BJJ">
    <property type="method" value="X-ray"/>
    <property type="resolution" value="2.40 A"/>
    <property type="chains" value="A=1-110"/>
</dbReference>
<dbReference type="PDBsum" id="4BJI"/>
<dbReference type="PDBsum" id="4BJJ"/>
<dbReference type="SMR" id="O14229"/>
<dbReference type="BioGRID" id="279302">
    <property type="interactions" value="9"/>
</dbReference>
<dbReference type="ComplexPortal" id="CPX-8903">
    <property type="entry name" value="General transcription factor TFIIIC complex"/>
</dbReference>
<dbReference type="FunCoup" id="O14229">
    <property type="interactions" value="419"/>
</dbReference>
<dbReference type="IntAct" id="O14229">
    <property type="interactions" value="1"/>
</dbReference>
<dbReference type="STRING" id="284812.O14229"/>
<dbReference type="iPTMnet" id="O14229"/>
<dbReference type="PaxDb" id="4896-SPAC6F12.11c.1"/>
<dbReference type="EnsemblFungi" id="SPAC6F12.11c.1">
    <property type="protein sequence ID" value="SPAC6F12.11c.1:pep"/>
    <property type="gene ID" value="SPAC6F12.11c"/>
</dbReference>
<dbReference type="GeneID" id="2542856"/>
<dbReference type="KEGG" id="spo:2542856"/>
<dbReference type="PomBase" id="SPAC6F12.11c">
    <property type="gene designation" value="sfc1"/>
</dbReference>
<dbReference type="VEuPathDB" id="FungiDB:SPAC6F12.11c"/>
<dbReference type="eggNOG" id="KOG2473">
    <property type="taxonomic scope" value="Eukaryota"/>
</dbReference>
<dbReference type="HOGENOM" id="CLU_016809_1_1_1"/>
<dbReference type="InParanoid" id="O14229"/>
<dbReference type="OMA" id="PPEYFVR"/>
<dbReference type="PhylomeDB" id="O14229"/>
<dbReference type="Reactome" id="R-SPO-76061">
    <property type="pathway name" value="RNA Polymerase III Transcription Initiation From Type 1 Promoter"/>
</dbReference>
<dbReference type="Reactome" id="R-SPO-76066">
    <property type="pathway name" value="RNA Polymerase III Transcription Initiation From Type 2 Promoter"/>
</dbReference>
<dbReference type="EvolutionaryTrace" id="O14229"/>
<dbReference type="PRO" id="PR:O14229"/>
<dbReference type="Proteomes" id="UP000002485">
    <property type="component" value="Chromosome I"/>
</dbReference>
<dbReference type="GO" id="GO:0005737">
    <property type="term" value="C:cytoplasm"/>
    <property type="evidence" value="ECO:0007005"/>
    <property type="project" value="PomBase"/>
</dbReference>
<dbReference type="GO" id="GO:0005829">
    <property type="term" value="C:cytosol"/>
    <property type="evidence" value="ECO:0007005"/>
    <property type="project" value="PomBase"/>
</dbReference>
<dbReference type="GO" id="GO:0005634">
    <property type="term" value="C:nucleus"/>
    <property type="evidence" value="ECO:0000303"/>
    <property type="project" value="PomBase"/>
</dbReference>
<dbReference type="GO" id="GO:0000127">
    <property type="term" value="C:transcription factor TFIIIC complex"/>
    <property type="evidence" value="ECO:0000314"/>
    <property type="project" value="PomBase"/>
</dbReference>
<dbReference type="GO" id="GO:0000992">
    <property type="term" value="F:RNA polymerase III cis-regulatory region sequence-specific DNA binding"/>
    <property type="evidence" value="ECO:0000314"/>
    <property type="project" value="PomBase"/>
</dbReference>
<dbReference type="GO" id="GO:0000995">
    <property type="term" value="F:RNA polymerase III general transcription initiation factor activity"/>
    <property type="evidence" value="ECO:0000314"/>
    <property type="project" value="PomBase"/>
</dbReference>
<dbReference type="GO" id="GO:0006384">
    <property type="term" value="P:transcription initiation at RNA polymerase III promoter"/>
    <property type="evidence" value="ECO:0000314"/>
    <property type="project" value="PomBase"/>
</dbReference>
<dbReference type="Gene3D" id="3.30.200.160">
    <property type="entry name" value="TFIIIC, subcomplex tauA, subunit Sfc1, barrel domain"/>
    <property type="match status" value="1"/>
</dbReference>
<dbReference type="InterPro" id="IPR019136">
    <property type="entry name" value="TF_IIIC_su-5_HTH"/>
</dbReference>
<dbReference type="InterPro" id="IPR040454">
    <property type="entry name" value="TF_IIIC_Tfc1/Sfc1"/>
</dbReference>
<dbReference type="InterPro" id="IPR041499">
    <property type="entry name" value="Tfc1/Sfc1_N"/>
</dbReference>
<dbReference type="InterPro" id="IPR042536">
    <property type="entry name" value="TFIIIC_tauA_Sfc1"/>
</dbReference>
<dbReference type="PANTHER" id="PTHR13230:SF5">
    <property type="entry name" value="GENERAL TRANSCRIPTION FACTOR 3C POLYPEPTIDE 5"/>
    <property type="match status" value="1"/>
</dbReference>
<dbReference type="PANTHER" id="PTHR13230">
    <property type="entry name" value="GENERAL TRANSCRIPTION FACTOR IIIC, POLYPEPTIDE 5"/>
    <property type="match status" value="1"/>
</dbReference>
<dbReference type="Pfam" id="PF09734">
    <property type="entry name" value="Tau95"/>
    <property type="match status" value="1"/>
</dbReference>
<dbReference type="Pfam" id="PF17682">
    <property type="entry name" value="Tau95_N"/>
    <property type="match status" value="1"/>
</dbReference>
<organism>
    <name type="scientific">Schizosaccharomyces pombe (strain 972 / ATCC 24843)</name>
    <name type="common">Fission yeast</name>
    <dbReference type="NCBI Taxonomy" id="284812"/>
    <lineage>
        <taxon>Eukaryota</taxon>
        <taxon>Fungi</taxon>
        <taxon>Dikarya</taxon>
        <taxon>Ascomycota</taxon>
        <taxon>Taphrinomycotina</taxon>
        <taxon>Schizosaccharomycetes</taxon>
        <taxon>Schizosaccharomycetales</taxon>
        <taxon>Schizosaccharomycetaceae</taxon>
        <taxon>Schizosaccharomyces</taxon>
    </lineage>
</organism>
<proteinExistence type="evidence at protein level"/>
<accession>O14229</accession>
<accession>Q9UTT3</accession>